<proteinExistence type="inferred from homology"/>
<protein>
    <recommendedName>
        <fullName evidence="1">Ribosome-recycling factor</fullName>
        <shortName evidence="1">RRF</shortName>
    </recommendedName>
    <alternativeName>
        <fullName evidence="1">Ribosome-releasing factor</fullName>
    </alternativeName>
</protein>
<dbReference type="EMBL" id="CP001581">
    <property type="protein sequence ID" value="ACO84340.1"/>
    <property type="molecule type" value="Genomic_DNA"/>
</dbReference>
<dbReference type="RefSeq" id="WP_003362574.1">
    <property type="nucleotide sequence ID" value="NC_012563.1"/>
</dbReference>
<dbReference type="SMR" id="C1FSK2"/>
<dbReference type="KEGG" id="cby:CLM_2725"/>
<dbReference type="eggNOG" id="COG0233">
    <property type="taxonomic scope" value="Bacteria"/>
</dbReference>
<dbReference type="HOGENOM" id="CLU_073981_2_0_9"/>
<dbReference type="Proteomes" id="UP000001374">
    <property type="component" value="Chromosome"/>
</dbReference>
<dbReference type="GO" id="GO:0005737">
    <property type="term" value="C:cytoplasm"/>
    <property type="evidence" value="ECO:0007669"/>
    <property type="project" value="UniProtKB-SubCell"/>
</dbReference>
<dbReference type="GO" id="GO:0043023">
    <property type="term" value="F:ribosomal large subunit binding"/>
    <property type="evidence" value="ECO:0007669"/>
    <property type="project" value="TreeGrafter"/>
</dbReference>
<dbReference type="GO" id="GO:0006415">
    <property type="term" value="P:translational termination"/>
    <property type="evidence" value="ECO:0007669"/>
    <property type="project" value="UniProtKB-UniRule"/>
</dbReference>
<dbReference type="CDD" id="cd00520">
    <property type="entry name" value="RRF"/>
    <property type="match status" value="1"/>
</dbReference>
<dbReference type="FunFam" id="1.10.132.20:FF:000001">
    <property type="entry name" value="Ribosome-recycling factor"/>
    <property type="match status" value="1"/>
</dbReference>
<dbReference type="FunFam" id="3.30.1360.40:FF:000001">
    <property type="entry name" value="Ribosome-recycling factor"/>
    <property type="match status" value="1"/>
</dbReference>
<dbReference type="Gene3D" id="3.30.1360.40">
    <property type="match status" value="1"/>
</dbReference>
<dbReference type="Gene3D" id="1.10.132.20">
    <property type="entry name" value="Ribosome-recycling factor"/>
    <property type="match status" value="1"/>
</dbReference>
<dbReference type="HAMAP" id="MF_00040">
    <property type="entry name" value="RRF"/>
    <property type="match status" value="1"/>
</dbReference>
<dbReference type="InterPro" id="IPR002661">
    <property type="entry name" value="Ribosome_recyc_fac"/>
</dbReference>
<dbReference type="InterPro" id="IPR023584">
    <property type="entry name" value="Ribosome_recyc_fac_dom"/>
</dbReference>
<dbReference type="InterPro" id="IPR036191">
    <property type="entry name" value="RRF_sf"/>
</dbReference>
<dbReference type="NCBIfam" id="TIGR00496">
    <property type="entry name" value="frr"/>
    <property type="match status" value="1"/>
</dbReference>
<dbReference type="PANTHER" id="PTHR20982:SF3">
    <property type="entry name" value="MITOCHONDRIAL RIBOSOME RECYCLING FACTOR PSEUDO 1"/>
    <property type="match status" value="1"/>
</dbReference>
<dbReference type="PANTHER" id="PTHR20982">
    <property type="entry name" value="RIBOSOME RECYCLING FACTOR"/>
    <property type="match status" value="1"/>
</dbReference>
<dbReference type="Pfam" id="PF01765">
    <property type="entry name" value="RRF"/>
    <property type="match status" value="1"/>
</dbReference>
<dbReference type="SUPFAM" id="SSF55194">
    <property type="entry name" value="Ribosome recycling factor, RRF"/>
    <property type="match status" value="1"/>
</dbReference>
<evidence type="ECO:0000255" key="1">
    <source>
        <dbReference type="HAMAP-Rule" id="MF_00040"/>
    </source>
</evidence>
<gene>
    <name evidence="1" type="primary">frr</name>
    <name type="ordered locus">CLM_2725</name>
</gene>
<organism>
    <name type="scientific">Clostridium botulinum (strain Kyoto / Type A2)</name>
    <dbReference type="NCBI Taxonomy" id="536232"/>
    <lineage>
        <taxon>Bacteria</taxon>
        <taxon>Bacillati</taxon>
        <taxon>Bacillota</taxon>
        <taxon>Clostridia</taxon>
        <taxon>Eubacteriales</taxon>
        <taxon>Clostridiaceae</taxon>
        <taxon>Clostridium</taxon>
    </lineage>
</organism>
<feature type="chain" id="PRO_1000194913" description="Ribosome-recycling factor">
    <location>
        <begin position="1"/>
        <end position="184"/>
    </location>
</feature>
<keyword id="KW-0963">Cytoplasm</keyword>
<keyword id="KW-0648">Protein biosynthesis</keyword>
<comment type="function">
    <text evidence="1">Responsible for the release of ribosomes from messenger RNA at the termination of protein biosynthesis. May increase the efficiency of translation by recycling ribosomes from one round of translation to another.</text>
</comment>
<comment type="subcellular location">
    <subcellularLocation>
        <location evidence="1">Cytoplasm</location>
    </subcellularLocation>
</comment>
<comment type="similarity">
    <text evidence="1">Belongs to the RRF family.</text>
</comment>
<sequence length="184" mass="20605">MIKEILKKADEKMGKTIVALKRELASMKAGRANPAMLDRIEAEYYGSMTPLNQLGNISVPEARVLLIQPWDKSALSAIEKAILKSDLGLNPSNDGTVIRLVIPELTEETRKNIVKTVKKTGEEAKVAIRSIRRDCNDDVKNLKKDDVSEDDIKKAEDDIQKKTDKYIKEIDSIISAKEKEILSI</sequence>
<accession>C1FSK2</accession>
<name>RRF_CLOBJ</name>
<reference key="1">
    <citation type="submission" date="2008-10" db="EMBL/GenBank/DDBJ databases">
        <title>Genome sequence of Clostridium botulinum A2 Kyoto.</title>
        <authorList>
            <person name="Shrivastava S."/>
            <person name="Brinkac L.M."/>
            <person name="Brown J.L."/>
            <person name="Bruce D."/>
            <person name="Detter C.C."/>
            <person name="Johnson E.A."/>
            <person name="Munk C.A."/>
            <person name="Smith L.A."/>
            <person name="Smith T.J."/>
            <person name="Sutton G."/>
            <person name="Brettin T.S."/>
        </authorList>
    </citation>
    <scope>NUCLEOTIDE SEQUENCE [LARGE SCALE GENOMIC DNA]</scope>
    <source>
        <strain>Kyoto / Type A2</strain>
    </source>
</reference>